<protein>
    <recommendedName>
        <fullName evidence="5">Conotoxin 3</fullName>
    </recommendedName>
    <component>
        <recommendedName>
            <fullName evidence="4">Conotoxin TeA31</fullName>
        </recommendedName>
    </component>
</protein>
<accession>Q3YEH7</accession>
<organism>
    <name type="scientific">Conus textile</name>
    <name type="common">Cloth-of-gold cone</name>
    <dbReference type="NCBI Taxonomy" id="6494"/>
    <lineage>
        <taxon>Eukaryota</taxon>
        <taxon>Metazoa</taxon>
        <taxon>Spiralia</taxon>
        <taxon>Lophotrochozoa</taxon>
        <taxon>Mollusca</taxon>
        <taxon>Gastropoda</taxon>
        <taxon>Caenogastropoda</taxon>
        <taxon>Neogastropoda</taxon>
        <taxon>Conoidea</taxon>
        <taxon>Conidae</taxon>
        <taxon>Conus</taxon>
        <taxon>Cylinder</taxon>
    </lineage>
</organism>
<evidence type="ECO:0000255" key="1"/>
<evidence type="ECO:0000269" key="2">
    <source>
    </source>
</evidence>
<evidence type="ECO:0000269" key="3">
    <source>
    </source>
</evidence>
<evidence type="ECO:0000303" key="4">
    <source>
    </source>
</evidence>
<evidence type="ECO:0000305" key="5"/>
<evidence type="ECO:0000305" key="6">
    <source>
    </source>
</evidence>
<keyword id="KW-0102">Bromination</keyword>
<keyword id="KW-0165">Cleavage on pair of basic residues</keyword>
<keyword id="KW-0903">Direct protein sequencing</keyword>
<keyword id="KW-1015">Disulfide bond</keyword>
<keyword id="KW-0964">Secreted</keyword>
<keyword id="KW-0732">Signal</keyword>
<keyword id="KW-0800">Toxin</keyword>
<reference key="1">
    <citation type="journal article" date="2006" name="Peptides">
        <title>Direct cDNA cloning of novel conotoxins of the T-superfamily from Conus textile.</title>
        <authorList>
            <person name="Luo S."/>
            <person name="Zhangsun D."/>
            <person name="Zhang B."/>
            <person name="Chen X."/>
            <person name="Feng J."/>
        </authorList>
    </citation>
    <scope>NUCLEOTIDE SEQUENCE [MRNA]</scope>
    <source>
        <tissue>Venom duct</tissue>
    </source>
</reference>
<reference key="2">
    <citation type="journal article" date="2009" name="Proc. Natl. Acad. Sci. U.S.A.">
        <title>Rapid sensitive analysis of cysteine rich peptide venom components.</title>
        <authorList>
            <person name="Ueberheide B.M."/>
            <person name="Fenyo D."/>
            <person name="Alewood P.F."/>
            <person name="Chait B.T."/>
        </authorList>
    </citation>
    <scope>PROTEIN SEQUENCE OF 50-61</scope>
    <scope>SUBCELLULAR LOCATION</scope>
    <scope>MASS SPECTROMETRY</scope>
    <scope>BROMINATION AT TRP-58</scope>
    <source>
        <tissue>Venom</tissue>
    </source>
</reference>
<reference key="3">
    <citation type="journal article" date="2012" name="J. Proteome Res.">
        <title>Constrained de novo sequencing of conotoxins.</title>
        <authorList>
            <person name="Bhatia S."/>
            <person name="Kil Y.J."/>
            <person name="Ueberheide B."/>
            <person name="Chait B.T."/>
            <person name="Tayo L."/>
            <person name="Cruz L."/>
            <person name="Lu B."/>
            <person name="Yates J.R. III"/>
            <person name="Bern M."/>
        </authorList>
    </citation>
    <scope>IDENTIFICATION BY MASS SPECTROMETRY</scope>
    <scope>SUBCELLULAR LOCATION</scope>
    <scope>BROMINATION AT TRP-58</scope>
    <source>
        <tissue>Venom</tissue>
    </source>
</reference>
<feature type="signal peptide" evidence="1">
    <location>
        <begin position="1"/>
        <end position="21"/>
    </location>
</feature>
<feature type="propeptide" id="PRO_0000274090" evidence="5">
    <location>
        <begin position="22"/>
        <end position="48"/>
    </location>
</feature>
<feature type="peptide" id="PRO_0000371304" description="Conotoxin 3" evidence="2">
    <location>
        <begin position="50"/>
        <end position="61"/>
    </location>
</feature>
<feature type="peptide" id="PRO_0000274091" description="Conotoxin TeA31" evidence="3">
    <location>
        <begin position="51"/>
        <end position="61"/>
    </location>
</feature>
<feature type="modified residue" description="6'-bromotryptophan" evidence="2 3">
    <location>
        <position position="58"/>
    </location>
</feature>
<comment type="subcellular location">
    <subcellularLocation>
        <location evidence="2">Secreted</location>
    </subcellularLocation>
</comment>
<comment type="tissue specificity">
    <text evidence="6">Expressed by the venom duct.</text>
</comment>
<comment type="domain">
    <text evidence="5">The cysteine framework is V (CC-CC).</text>
</comment>
<comment type="PTM">
    <text evidence="5">Contains 2 disulfide bonds that can be either 'C1-C3, C2-C4' or 'C1-C4, C2-C3', since these disulfide connectivities have been observed for conotoxins with cysteine framework V (for examples, see AC P0DQQ7 and AC P81755).</text>
</comment>
<comment type="PTM">
    <text evidence="2">Contains 2 disulfide bonds.</text>
</comment>
<comment type="mass spectrometry">
    <molecule>Conotoxin TeA31</molecule>
</comment>
<comment type="mass spectrometry">
    <molecule>Conotoxin 3</molecule>
</comment>
<comment type="similarity">
    <text evidence="5">Belongs to the conotoxin T superfamily.</text>
</comment>
<proteinExistence type="evidence at protein level"/>
<name>CT13_CONTE</name>
<sequence>MRCLPVFVILLLLIASVPSDAVQLKTKDDMPLPSFNGNARRTPRMLSNKRICCYPNVWCCD</sequence>
<dbReference type="EMBL" id="DQ141136">
    <property type="protein sequence ID" value="AAZ85401.1"/>
    <property type="molecule type" value="mRNA"/>
</dbReference>
<dbReference type="ConoServer" id="1673">
    <property type="toxin name" value="TeA31 precursor"/>
</dbReference>
<dbReference type="GO" id="GO:0005576">
    <property type="term" value="C:extracellular region"/>
    <property type="evidence" value="ECO:0007669"/>
    <property type="project" value="UniProtKB-SubCell"/>
</dbReference>
<dbReference type="GO" id="GO:0090729">
    <property type="term" value="F:toxin activity"/>
    <property type="evidence" value="ECO:0007669"/>
    <property type="project" value="UniProtKB-KW"/>
</dbReference>
<dbReference type="InterPro" id="IPR031565">
    <property type="entry name" value="T-conotoxin"/>
</dbReference>
<dbReference type="Pfam" id="PF16981">
    <property type="entry name" value="Chi-conotoxin"/>
    <property type="match status" value="1"/>
</dbReference>